<accession>Q633N9</accession>
<name>ZAPA_BACCZ</name>
<evidence type="ECO:0000255" key="1">
    <source>
        <dbReference type="HAMAP-Rule" id="MF_02013"/>
    </source>
</evidence>
<evidence type="ECO:0000305" key="2"/>
<keyword id="KW-0131">Cell cycle</keyword>
<keyword id="KW-0132">Cell division</keyword>
<keyword id="KW-0963">Cytoplasm</keyword>
<keyword id="KW-0717">Septation</keyword>
<dbReference type="EMBL" id="CP000001">
    <property type="protein sequence ID" value="AAU15970.1"/>
    <property type="status" value="ALT_INIT"/>
    <property type="molecule type" value="Genomic_DNA"/>
</dbReference>
<dbReference type="RefSeq" id="WP_000082701.1">
    <property type="nucleotide sequence ID" value="NZ_CP009968.1"/>
</dbReference>
<dbReference type="SMR" id="Q633N9"/>
<dbReference type="GeneID" id="93006559"/>
<dbReference type="KEGG" id="bcz:BCE33L4299"/>
<dbReference type="PATRIC" id="fig|288681.22.peg.1077"/>
<dbReference type="Proteomes" id="UP000002612">
    <property type="component" value="Chromosome"/>
</dbReference>
<dbReference type="GO" id="GO:0032153">
    <property type="term" value="C:cell division site"/>
    <property type="evidence" value="ECO:0007669"/>
    <property type="project" value="TreeGrafter"/>
</dbReference>
<dbReference type="GO" id="GO:0030428">
    <property type="term" value="C:cell septum"/>
    <property type="evidence" value="ECO:0007669"/>
    <property type="project" value="TreeGrafter"/>
</dbReference>
<dbReference type="GO" id="GO:0005829">
    <property type="term" value="C:cytosol"/>
    <property type="evidence" value="ECO:0007669"/>
    <property type="project" value="TreeGrafter"/>
</dbReference>
<dbReference type="GO" id="GO:0005886">
    <property type="term" value="C:plasma membrane"/>
    <property type="evidence" value="ECO:0007669"/>
    <property type="project" value="UniProtKB-UniRule"/>
</dbReference>
<dbReference type="GO" id="GO:0000917">
    <property type="term" value="P:division septum assembly"/>
    <property type="evidence" value="ECO:0007669"/>
    <property type="project" value="UniProtKB-KW"/>
</dbReference>
<dbReference type="GO" id="GO:0043093">
    <property type="term" value="P:FtsZ-dependent cytokinesis"/>
    <property type="evidence" value="ECO:0007669"/>
    <property type="project" value="TreeGrafter"/>
</dbReference>
<dbReference type="GO" id="GO:0000921">
    <property type="term" value="P:septin ring assembly"/>
    <property type="evidence" value="ECO:0007669"/>
    <property type="project" value="TreeGrafter"/>
</dbReference>
<dbReference type="Gene3D" id="6.10.250.790">
    <property type="match status" value="1"/>
</dbReference>
<dbReference type="HAMAP" id="MF_02013">
    <property type="entry name" value="ZapA_type2"/>
    <property type="match status" value="1"/>
</dbReference>
<dbReference type="InterPro" id="IPR053712">
    <property type="entry name" value="Bac_CellDiv_Activator"/>
</dbReference>
<dbReference type="InterPro" id="IPR007838">
    <property type="entry name" value="Cell_div_ZapA-like"/>
</dbReference>
<dbReference type="InterPro" id="IPR036192">
    <property type="entry name" value="Cell_div_ZapA-like_sf"/>
</dbReference>
<dbReference type="InterPro" id="IPR023688">
    <property type="entry name" value="Cell_div_ZapA_firmicutes"/>
</dbReference>
<dbReference type="NCBIfam" id="NF010724">
    <property type="entry name" value="PRK14126.1"/>
    <property type="match status" value="1"/>
</dbReference>
<dbReference type="PANTHER" id="PTHR34981">
    <property type="entry name" value="CELL DIVISION PROTEIN ZAPA"/>
    <property type="match status" value="1"/>
</dbReference>
<dbReference type="PANTHER" id="PTHR34981:SF1">
    <property type="entry name" value="CELL DIVISION PROTEIN ZAPA"/>
    <property type="match status" value="1"/>
</dbReference>
<dbReference type="Pfam" id="PF05164">
    <property type="entry name" value="ZapA"/>
    <property type="match status" value="1"/>
</dbReference>
<dbReference type="SUPFAM" id="SSF102829">
    <property type="entry name" value="Cell division protein ZapA-like"/>
    <property type="match status" value="1"/>
</dbReference>
<feature type="chain" id="PRO_0000345681" description="Cell division protein ZapA">
    <location>
        <begin position="1"/>
        <end position="89"/>
    </location>
</feature>
<protein>
    <recommendedName>
        <fullName evidence="1">Cell division protein ZapA</fullName>
    </recommendedName>
    <alternativeName>
        <fullName evidence="1">Z ring-associated protein ZapA</fullName>
    </alternativeName>
</protein>
<sequence>MSQQKGKKSRINVEIYGQQYSVVGDESTSHIRMVAAIVDDKMRELNAKNPSLDTSRLAVLTAVNVIHDYIKLKEEHEKLKESMTKKGME</sequence>
<reference key="1">
    <citation type="journal article" date="2006" name="J. Bacteriol.">
        <title>Pathogenomic sequence analysis of Bacillus cereus and Bacillus thuringiensis isolates closely related to Bacillus anthracis.</title>
        <authorList>
            <person name="Han C.S."/>
            <person name="Xie G."/>
            <person name="Challacombe J.F."/>
            <person name="Altherr M.R."/>
            <person name="Bhotika S.S."/>
            <person name="Bruce D."/>
            <person name="Campbell C.S."/>
            <person name="Campbell M.L."/>
            <person name="Chen J."/>
            <person name="Chertkov O."/>
            <person name="Cleland C."/>
            <person name="Dimitrijevic M."/>
            <person name="Doggett N.A."/>
            <person name="Fawcett J.J."/>
            <person name="Glavina T."/>
            <person name="Goodwin L.A."/>
            <person name="Hill K.K."/>
            <person name="Hitchcock P."/>
            <person name="Jackson P.J."/>
            <person name="Keim P."/>
            <person name="Kewalramani A.R."/>
            <person name="Longmire J."/>
            <person name="Lucas S."/>
            <person name="Malfatti S."/>
            <person name="McMurry K."/>
            <person name="Meincke L.J."/>
            <person name="Misra M."/>
            <person name="Moseman B.L."/>
            <person name="Mundt M."/>
            <person name="Munk A.C."/>
            <person name="Okinaka R.T."/>
            <person name="Parson-Quintana B."/>
            <person name="Reilly L.P."/>
            <person name="Richardson P."/>
            <person name="Robinson D.L."/>
            <person name="Rubin E."/>
            <person name="Saunders E."/>
            <person name="Tapia R."/>
            <person name="Tesmer J.G."/>
            <person name="Thayer N."/>
            <person name="Thompson L.S."/>
            <person name="Tice H."/>
            <person name="Ticknor L.O."/>
            <person name="Wills P.L."/>
            <person name="Brettin T.S."/>
            <person name="Gilna P."/>
        </authorList>
    </citation>
    <scope>NUCLEOTIDE SEQUENCE [LARGE SCALE GENOMIC DNA]</scope>
    <source>
        <strain>ZK / E33L</strain>
    </source>
</reference>
<proteinExistence type="inferred from homology"/>
<comment type="function">
    <text evidence="1">Activator of cell division through the inhibition of FtsZ GTPase activity, therefore promoting FtsZ assembly into bundles of protofilaments necessary for the formation of the division Z ring. It is recruited early at mid-cell but it is not essential for cell division.</text>
</comment>
<comment type="subunit">
    <text evidence="1">Homodimer. Interacts with FtsZ.</text>
</comment>
<comment type="subcellular location">
    <subcellularLocation>
        <location evidence="1">Cytoplasm</location>
    </subcellularLocation>
    <text evidence="1">Localizes at mid-cell. In sporulating cells, localizes near the cell poles.</text>
</comment>
<comment type="similarity">
    <text evidence="1">Belongs to the ZapA family. Type 2 subfamily.</text>
</comment>
<comment type="sequence caution" evidence="2">
    <conflict type="erroneous initiation">
        <sequence resource="EMBL-CDS" id="AAU15970"/>
    </conflict>
</comment>
<organism>
    <name type="scientific">Bacillus cereus (strain ZK / E33L)</name>
    <dbReference type="NCBI Taxonomy" id="288681"/>
    <lineage>
        <taxon>Bacteria</taxon>
        <taxon>Bacillati</taxon>
        <taxon>Bacillota</taxon>
        <taxon>Bacilli</taxon>
        <taxon>Bacillales</taxon>
        <taxon>Bacillaceae</taxon>
        <taxon>Bacillus</taxon>
        <taxon>Bacillus cereus group</taxon>
    </lineage>
</organism>
<gene>
    <name evidence="1" type="primary">zapA</name>
    <name type="ordered locus">BCE33L4299</name>
</gene>